<keyword id="KW-0560">Oxidoreductase</keyword>
<keyword id="KW-0663">Pyridoxal phosphate</keyword>
<keyword id="KW-1185">Reference proteome</keyword>
<gene>
    <name evidence="1" type="primary">gcvPB</name>
    <name type="ordered locus">Ctha_1563</name>
</gene>
<sequence length="493" mass="54523">MTEPLIFEKSKSGRKGYTLPKCDVPVQEVSELIPAQFLRKAKADLPEVQENEVVRHFVKLSTLNHHVDKGMYPLGSCTMKYNPKVNEVTSALPGFSALHPLQPQESVQGALKLMYELQEWLKEICGMKAVSLQPVAGAHGELTGILLIRKYHEKQGKPRKKILVPDSAHGTNPASSAIAGYMTVGVKTNARGLTDMDDLRAKLDEDVAALMLTNPNTLGIFESQILEISELLHANGSLLYMDGANMNALLGITRPGDMGFDVVHYNLHKTFSTPHGGGGPGSGPVGVSEKLVEFLPTPAIEKKESGEKTSYCLNYDLPDSIGKMSGFYGNFSIMVRAYTYLLMHGAKGLRAVSENAIINATYLLSRLRGKFDVPYDEQIMHEFCLSGERQKTNGVKTLDMAKRLLDFGFHAPTIYFPLIVKECMMIEPTESETKETLDDFADVMLRIAEEAESNPEMVLNAPHNTPVKRLDDAYASRNINIKYTPKEKETVEA</sequence>
<protein>
    <recommendedName>
        <fullName evidence="1">Probable glycine dehydrogenase (decarboxylating) subunit 2</fullName>
        <ecNumber evidence="1">1.4.4.2</ecNumber>
    </recommendedName>
    <alternativeName>
        <fullName evidence="1">Glycine cleavage system P-protein subunit 2</fullName>
    </alternativeName>
    <alternativeName>
        <fullName evidence="1">Glycine decarboxylase subunit 2</fullName>
    </alternativeName>
    <alternativeName>
        <fullName evidence="1">Glycine dehydrogenase (aminomethyl-transferring) subunit 2</fullName>
    </alternativeName>
</protein>
<feature type="chain" id="PRO_1000132497" description="Probable glycine dehydrogenase (decarboxylating) subunit 2">
    <location>
        <begin position="1"/>
        <end position="493"/>
    </location>
</feature>
<feature type="modified residue" description="N6-(pyridoxal phosphate)lysine" evidence="1">
    <location>
        <position position="269"/>
    </location>
</feature>
<comment type="function">
    <text evidence="1">The glycine cleavage system catalyzes the degradation of glycine. The P protein binds the alpha-amino group of glycine through its pyridoxal phosphate cofactor; CO(2) is released and the remaining methylamine moiety is then transferred to the lipoamide cofactor of the H protein.</text>
</comment>
<comment type="catalytic activity">
    <reaction evidence="1">
        <text>N(6)-[(R)-lipoyl]-L-lysyl-[glycine-cleavage complex H protein] + glycine + H(+) = N(6)-[(R)-S(8)-aminomethyldihydrolipoyl]-L-lysyl-[glycine-cleavage complex H protein] + CO2</text>
        <dbReference type="Rhea" id="RHEA:24304"/>
        <dbReference type="Rhea" id="RHEA-COMP:10494"/>
        <dbReference type="Rhea" id="RHEA-COMP:10495"/>
        <dbReference type="ChEBI" id="CHEBI:15378"/>
        <dbReference type="ChEBI" id="CHEBI:16526"/>
        <dbReference type="ChEBI" id="CHEBI:57305"/>
        <dbReference type="ChEBI" id="CHEBI:83099"/>
        <dbReference type="ChEBI" id="CHEBI:83143"/>
        <dbReference type="EC" id="1.4.4.2"/>
    </reaction>
</comment>
<comment type="cofactor">
    <cofactor evidence="1">
        <name>pyridoxal 5'-phosphate</name>
        <dbReference type="ChEBI" id="CHEBI:597326"/>
    </cofactor>
</comment>
<comment type="subunit">
    <text evidence="1">The glycine cleavage system is composed of four proteins: P, T, L and H. In this organism, the P 'protein' is a heterodimer of two subunits.</text>
</comment>
<comment type="similarity">
    <text evidence="1">Belongs to the GcvP family. C-terminal subunit subfamily.</text>
</comment>
<organism>
    <name type="scientific">Chloroherpeton thalassium (strain ATCC 35110 / GB-78)</name>
    <dbReference type="NCBI Taxonomy" id="517418"/>
    <lineage>
        <taxon>Bacteria</taxon>
        <taxon>Pseudomonadati</taxon>
        <taxon>Chlorobiota</taxon>
        <taxon>Chlorobiia</taxon>
        <taxon>Chlorobiales</taxon>
        <taxon>Chloroherpetonaceae</taxon>
        <taxon>Chloroherpeton</taxon>
    </lineage>
</organism>
<name>GCSPB_CHLT3</name>
<accession>B3QS77</accession>
<dbReference type="EC" id="1.4.4.2" evidence="1"/>
<dbReference type="EMBL" id="CP001100">
    <property type="protein sequence ID" value="ACF14022.1"/>
    <property type="molecule type" value="Genomic_DNA"/>
</dbReference>
<dbReference type="RefSeq" id="WP_012500106.1">
    <property type="nucleotide sequence ID" value="NC_011026.1"/>
</dbReference>
<dbReference type="SMR" id="B3QS77"/>
<dbReference type="STRING" id="517418.Ctha_1563"/>
<dbReference type="KEGG" id="cts:Ctha_1563"/>
<dbReference type="eggNOG" id="COG1003">
    <property type="taxonomic scope" value="Bacteria"/>
</dbReference>
<dbReference type="HOGENOM" id="CLU_004620_5_0_10"/>
<dbReference type="OrthoDB" id="9801272at2"/>
<dbReference type="Proteomes" id="UP000001208">
    <property type="component" value="Chromosome"/>
</dbReference>
<dbReference type="GO" id="GO:0005829">
    <property type="term" value="C:cytosol"/>
    <property type="evidence" value="ECO:0007669"/>
    <property type="project" value="TreeGrafter"/>
</dbReference>
<dbReference type="GO" id="GO:0005960">
    <property type="term" value="C:glycine cleavage complex"/>
    <property type="evidence" value="ECO:0007669"/>
    <property type="project" value="TreeGrafter"/>
</dbReference>
<dbReference type="GO" id="GO:0016594">
    <property type="term" value="F:glycine binding"/>
    <property type="evidence" value="ECO:0007669"/>
    <property type="project" value="TreeGrafter"/>
</dbReference>
<dbReference type="GO" id="GO:0004375">
    <property type="term" value="F:glycine dehydrogenase (decarboxylating) activity"/>
    <property type="evidence" value="ECO:0007669"/>
    <property type="project" value="UniProtKB-EC"/>
</dbReference>
<dbReference type="GO" id="GO:0030170">
    <property type="term" value="F:pyridoxal phosphate binding"/>
    <property type="evidence" value="ECO:0007669"/>
    <property type="project" value="TreeGrafter"/>
</dbReference>
<dbReference type="GO" id="GO:0019464">
    <property type="term" value="P:glycine decarboxylation via glycine cleavage system"/>
    <property type="evidence" value="ECO:0007669"/>
    <property type="project" value="UniProtKB-UniRule"/>
</dbReference>
<dbReference type="CDD" id="cd00613">
    <property type="entry name" value="GDC-P"/>
    <property type="match status" value="1"/>
</dbReference>
<dbReference type="FunFam" id="3.40.640.10:FF:000224">
    <property type="entry name" value="Probable glycine dehydrogenase (decarboxylating) subunit 2"/>
    <property type="match status" value="1"/>
</dbReference>
<dbReference type="FunFam" id="3.90.1150.10:FF:000014">
    <property type="entry name" value="Probable glycine dehydrogenase (decarboxylating) subunit 2"/>
    <property type="match status" value="1"/>
</dbReference>
<dbReference type="Gene3D" id="6.20.440.10">
    <property type="match status" value="1"/>
</dbReference>
<dbReference type="Gene3D" id="3.90.1150.10">
    <property type="entry name" value="Aspartate Aminotransferase, domain 1"/>
    <property type="match status" value="1"/>
</dbReference>
<dbReference type="Gene3D" id="3.40.640.10">
    <property type="entry name" value="Type I PLP-dependent aspartate aminotransferase-like (Major domain)"/>
    <property type="match status" value="1"/>
</dbReference>
<dbReference type="HAMAP" id="MF_00713">
    <property type="entry name" value="GcvPB"/>
    <property type="match status" value="1"/>
</dbReference>
<dbReference type="InterPro" id="IPR023012">
    <property type="entry name" value="GcvPB"/>
</dbReference>
<dbReference type="InterPro" id="IPR049316">
    <property type="entry name" value="GDC-P_C"/>
</dbReference>
<dbReference type="InterPro" id="IPR049315">
    <property type="entry name" value="GDC-P_N"/>
</dbReference>
<dbReference type="InterPro" id="IPR020581">
    <property type="entry name" value="GDC_P"/>
</dbReference>
<dbReference type="InterPro" id="IPR015424">
    <property type="entry name" value="PyrdxlP-dep_Trfase"/>
</dbReference>
<dbReference type="InterPro" id="IPR015421">
    <property type="entry name" value="PyrdxlP-dep_Trfase_major"/>
</dbReference>
<dbReference type="InterPro" id="IPR015422">
    <property type="entry name" value="PyrdxlP-dep_Trfase_small"/>
</dbReference>
<dbReference type="NCBIfam" id="NF003346">
    <property type="entry name" value="PRK04366.1"/>
    <property type="match status" value="1"/>
</dbReference>
<dbReference type="PANTHER" id="PTHR11773:SF1">
    <property type="entry name" value="GLYCINE DEHYDROGENASE (DECARBOXYLATING), MITOCHONDRIAL"/>
    <property type="match status" value="1"/>
</dbReference>
<dbReference type="PANTHER" id="PTHR11773">
    <property type="entry name" value="GLYCINE DEHYDROGENASE, DECARBOXYLATING"/>
    <property type="match status" value="1"/>
</dbReference>
<dbReference type="Pfam" id="PF21478">
    <property type="entry name" value="GcvP2_C"/>
    <property type="match status" value="1"/>
</dbReference>
<dbReference type="Pfam" id="PF02347">
    <property type="entry name" value="GDC-P"/>
    <property type="match status" value="1"/>
</dbReference>
<dbReference type="SUPFAM" id="SSF53383">
    <property type="entry name" value="PLP-dependent transferases"/>
    <property type="match status" value="1"/>
</dbReference>
<proteinExistence type="inferred from homology"/>
<evidence type="ECO:0000255" key="1">
    <source>
        <dbReference type="HAMAP-Rule" id="MF_00713"/>
    </source>
</evidence>
<reference key="1">
    <citation type="submission" date="2008-06" db="EMBL/GenBank/DDBJ databases">
        <title>Complete sequence of Chloroherpeton thalassium ATCC 35110.</title>
        <authorList>
            <consortium name="US DOE Joint Genome Institute"/>
            <person name="Lucas S."/>
            <person name="Copeland A."/>
            <person name="Lapidus A."/>
            <person name="Glavina del Rio T."/>
            <person name="Dalin E."/>
            <person name="Tice H."/>
            <person name="Bruce D."/>
            <person name="Goodwin L."/>
            <person name="Pitluck S."/>
            <person name="Schmutz J."/>
            <person name="Larimer F."/>
            <person name="Land M."/>
            <person name="Hauser L."/>
            <person name="Kyrpides N."/>
            <person name="Mikhailova N."/>
            <person name="Liu Z."/>
            <person name="Li T."/>
            <person name="Zhao F."/>
            <person name="Overmann J."/>
            <person name="Bryant D.A."/>
            <person name="Richardson P."/>
        </authorList>
    </citation>
    <scope>NUCLEOTIDE SEQUENCE [LARGE SCALE GENOMIC DNA]</scope>
    <source>
        <strain>ATCC 35110 / GB-78</strain>
    </source>
</reference>